<reference key="1">
    <citation type="journal article" date="2005" name="Nature">
        <title>Genome sequencing and analysis of Aspergillus oryzae.</title>
        <authorList>
            <person name="Machida M."/>
            <person name="Asai K."/>
            <person name="Sano M."/>
            <person name="Tanaka T."/>
            <person name="Kumagai T."/>
            <person name="Terai G."/>
            <person name="Kusumoto K."/>
            <person name="Arima T."/>
            <person name="Akita O."/>
            <person name="Kashiwagi Y."/>
            <person name="Abe K."/>
            <person name="Gomi K."/>
            <person name="Horiuchi H."/>
            <person name="Kitamoto K."/>
            <person name="Kobayashi T."/>
            <person name="Takeuchi M."/>
            <person name="Denning D.W."/>
            <person name="Galagan J.E."/>
            <person name="Nierman W.C."/>
            <person name="Yu J."/>
            <person name="Archer D.B."/>
            <person name="Bennett J.W."/>
            <person name="Bhatnagar D."/>
            <person name="Cleveland T.E."/>
            <person name="Fedorova N.D."/>
            <person name="Gotoh O."/>
            <person name="Horikawa H."/>
            <person name="Hosoyama A."/>
            <person name="Ichinomiya M."/>
            <person name="Igarashi R."/>
            <person name="Iwashita K."/>
            <person name="Juvvadi P.R."/>
            <person name="Kato M."/>
            <person name="Kato Y."/>
            <person name="Kin T."/>
            <person name="Kokubun A."/>
            <person name="Maeda H."/>
            <person name="Maeyama N."/>
            <person name="Maruyama J."/>
            <person name="Nagasaki H."/>
            <person name="Nakajima T."/>
            <person name="Oda K."/>
            <person name="Okada K."/>
            <person name="Paulsen I."/>
            <person name="Sakamoto K."/>
            <person name="Sawano T."/>
            <person name="Takahashi M."/>
            <person name="Takase K."/>
            <person name="Terabayashi Y."/>
            <person name="Wortman J.R."/>
            <person name="Yamada O."/>
            <person name="Yamagata Y."/>
            <person name="Anazawa H."/>
            <person name="Hata Y."/>
            <person name="Koide Y."/>
            <person name="Komori T."/>
            <person name="Koyama Y."/>
            <person name="Minetoki T."/>
            <person name="Suharnan S."/>
            <person name="Tanaka A."/>
            <person name="Isono K."/>
            <person name="Kuhara S."/>
            <person name="Ogasawara N."/>
            <person name="Kikuchi H."/>
        </authorList>
    </citation>
    <scope>NUCLEOTIDE SEQUENCE [LARGE SCALE GENOMIC DNA]</scope>
    <source>
        <strain>ATCC 42149 / RIB 40</strain>
    </source>
</reference>
<reference key="2">
    <citation type="journal article" date="2021" name="Int. J. Biol. Macromol.">
        <title>Novel catalytic potential of a hyperthermostable mono-copper oxidase (LPMO-AOAA17) for the oxidation of lignin monomers and depolymerisation of lignin dimer in aqueous media.</title>
        <authorList>
            <person name="Bhatia S."/>
            <person name="Yadav S.K."/>
        </authorList>
    </citation>
    <scope>FUNCTION</scope>
    <scope>CATALYTIC ACTIVITY</scope>
    <scope>BIOPHYSICOCHEMICAL PROPERTIES</scope>
    <scope>COFACTOR</scope>
    <scope>BIOTECHNOLOGY</scope>
</reference>
<dbReference type="EC" id="1.14.99.-" evidence="6"/>
<dbReference type="EMBL" id="AP007157">
    <property type="protein sequence ID" value="BAE59290.1"/>
    <property type="molecule type" value="Genomic_DNA"/>
</dbReference>
<dbReference type="RefSeq" id="XP_001821292.1">
    <property type="nucleotide sequence ID" value="XM_001821240.1"/>
</dbReference>
<dbReference type="SMR" id="Q2UGM5"/>
<dbReference type="STRING" id="510516.Q2UGM5"/>
<dbReference type="CAZy" id="AA9">
    <property type="family name" value="Auxiliary Activities 9"/>
</dbReference>
<dbReference type="EnsemblFungi" id="BAE59290">
    <property type="protein sequence ID" value="BAE59290"/>
    <property type="gene ID" value="AO090023000787"/>
</dbReference>
<dbReference type="GeneID" id="5993294"/>
<dbReference type="KEGG" id="aor:AO090023000787"/>
<dbReference type="VEuPathDB" id="FungiDB:AO090023000787"/>
<dbReference type="HOGENOM" id="CLU_031730_1_3_1"/>
<dbReference type="OMA" id="PPDTIAW"/>
<dbReference type="OrthoDB" id="48411at5052"/>
<dbReference type="Proteomes" id="UP000006564">
    <property type="component" value="Chromosome 3"/>
</dbReference>
<dbReference type="GO" id="GO:0005576">
    <property type="term" value="C:extracellular region"/>
    <property type="evidence" value="ECO:0007669"/>
    <property type="project" value="UniProtKB-SubCell"/>
</dbReference>
<dbReference type="GO" id="GO:0046872">
    <property type="term" value="F:metal ion binding"/>
    <property type="evidence" value="ECO:0007669"/>
    <property type="project" value="UniProtKB-KW"/>
</dbReference>
<dbReference type="GO" id="GO:0004497">
    <property type="term" value="F:monooxygenase activity"/>
    <property type="evidence" value="ECO:0007669"/>
    <property type="project" value="UniProtKB-KW"/>
</dbReference>
<dbReference type="GO" id="GO:0046274">
    <property type="term" value="P:lignin catabolic process"/>
    <property type="evidence" value="ECO:0007669"/>
    <property type="project" value="UniProtKB-KW"/>
</dbReference>
<dbReference type="CDD" id="cd21175">
    <property type="entry name" value="LPMO_AA9"/>
    <property type="match status" value="1"/>
</dbReference>
<dbReference type="Gene3D" id="2.70.50.70">
    <property type="match status" value="1"/>
</dbReference>
<dbReference type="InterPro" id="IPR049892">
    <property type="entry name" value="AA9"/>
</dbReference>
<dbReference type="InterPro" id="IPR005103">
    <property type="entry name" value="AA9_LPMO"/>
</dbReference>
<dbReference type="PANTHER" id="PTHR33353:SF34">
    <property type="entry name" value="ENDO-BETA-1,4-GLUCANASE D"/>
    <property type="match status" value="1"/>
</dbReference>
<dbReference type="PANTHER" id="PTHR33353">
    <property type="entry name" value="PUTATIVE (AFU_ORTHOLOGUE AFUA_1G12560)-RELATED"/>
    <property type="match status" value="1"/>
</dbReference>
<dbReference type="Pfam" id="PF03443">
    <property type="entry name" value="AA9"/>
    <property type="match status" value="1"/>
</dbReference>
<sequence length="250" mass="26118">MAMSKIVSLTGLLASASLVAGHGYVSGVVIDGQYYGGYLVDKYAYSDNAPDTIGWTTSATDLGFVDGTGYQSPDIICHKDGAPGALTAEVAAGGKIELQWTEWPESHHGPVLNYLAPCGGECSAVDKTTLEFFKIEAKGLIDGTTPPGQWATDDLISNNNSYTVTIPTSIQEGNYVLRHEIIGLHSAGQKDGAQNYPQCINIKVTGGGDATPAGTAGEALYKDTDAGILFDIYSDLSGGYPIPGPEVFSA</sequence>
<name>LP17_ASPOR</name>
<gene>
    <name evidence="7" type="primary">AA17</name>
    <name type="ORF">AO090023000787</name>
</gene>
<organism>
    <name type="scientific">Aspergillus oryzae (strain ATCC 42149 / RIB 40)</name>
    <name type="common">Yellow koji mold</name>
    <dbReference type="NCBI Taxonomy" id="510516"/>
    <lineage>
        <taxon>Eukaryota</taxon>
        <taxon>Fungi</taxon>
        <taxon>Dikarya</taxon>
        <taxon>Ascomycota</taxon>
        <taxon>Pezizomycotina</taxon>
        <taxon>Eurotiomycetes</taxon>
        <taxon>Eurotiomycetidae</taxon>
        <taxon>Eurotiales</taxon>
        <taxon>Aspergillaceae</taxon>
        <taxon>Aspergillus</taxon>
        <taxon>Aspergillus subgen. Circumdati</taxon>
    </lineage>
</organism>
<feature type="signal peptide" evidence="4">
    <location>
        <begin position="1"/>
        <end position="21"/>
    </location>
</feature>
<feature type="chain" id="PRO_5004217125" description="AA9 family lytic polysaccharide monooxygenase AA17">
    <location>
        <begin position="22"/>
        <end position="250"/>
    </location>
</feature>
<feature type="binding site" evidence="3">
    <location>
        <position position="22"/>
    </location>
    <ligand>
        <name>Cu(2+)</name>
        <dbReference type="ChEBI" id="CHEBI:29036"/>
        <note>catalytic</note>
    </ligand>
</feature>
<feature type="binding site" evidence="3">
    <location>
        <position position="107"/>
    </location>
    <ligand>
        <name>Cu(2+)</name>
        <dbReference type="ChEBI" id="CHEBI:29036"/>
        <note>catalytic</note>
    </ligand>
</feature>
<feature type="binding site" evidence="2">
    <location>
        <position position="185"/>
    </location>
    <ligand>
        <name>O2</name>
        <dbReference type="ChEBI" id="CHEBI:15379"/>
    </ligand>
</feature>
<feature type="binding site" evidence="2">
    <location>
        <position position="194"/>
    </location>
    <ligand>
        <name>O2</name>
        <dbReference type="ChEBI" id="CHEBI:15379"/>
    </ligand>
</feature>
<feature type="binding site" evidence="3">
    <location>
        <position position="196"/>
    </location>
    <ligand>
        <name>Cu(2+)</name>
        <dbReference type="ChEBI" id="CHEBI:29036"/>
        <note>catalytic</note>
    </ligand>
</feature>
<feature type="glycosylation site" description="N-linked (GlcNAc...) asparagine" evidence="5">
    <location>
        <position position="159"/>
    </location>
</feature>
<feature type="disulfide bond" evidence="3">
    <location>
        <begin position="77"/>
        <end position="199"/>
    </location>
</feature>
<feature type="disulfide bond" evidence="3">
    <location>
        <begin position="118"/>
        <end position="122"/>
    </location>
</feature>
<evidence type="ECO:0000250" key="1">
    <source>
        <dbReference type="UniProtKB" id="A0A482A9N4"/>
    </source>
</evidence>
<evidence type="ECO:0000250" key="2">
    <source>
        <dbReference type="UniProtKB" id="Q1K8B6"/>
    </source>
</evidence>
<evidence type="ECO:0000250" key="3">
    <source>
        <dbReference type="UniProtKB" id="Q4WP32"/>
    </source>
</evidence>
<evidence type="ECO:0000255" key="4"/>
<evidence type="ECO:0000255" key="5">
    <source>
        <dbReference type="PROSITE-ProRule" id="PRU00498"/>
    </source>
</evidence>
<evidence type="ECO:0000269" key="6">
    <source>
    </source>
</evidence>
<evidence type="ECO:0000303" key="7">
    <source>
    </source>
</evidence>
<evidence type="ECO:0000305" key="8"/>
<keyword id="KW-0186">Copper</keyword>
<keyword id="KW-1015">Disulfide bond</keyword>
<keyword id="KW-0325">Glycoprotein</keyword>
<keyword id="KW-0439">Lignin degradation</keyword>
<keyword id="KW-0479">Metal-binding</keyword>
<keyword id="KW-0503">Monooxygenase</keyword>
<keyword id="KW-0560">Oxidoreductase</keyword>
<keyword id="KW-1185">Reference proteome</keyword>
<keyword id="KW-0964">Secreted</keyword>
<keyword id="KW-0732">Signal</keyword>
<proteinExistence type="evidence at protein level"/>
<accession>Q2UGM5</accession>
<comment type="function">
    <text evidence="6">Lytic polysaccharide monooxygenase (LPMO) that exhibits oxidative cleavage beta-O-4 linkage of lignin resulting in the formation of aromatic compound guaiacol (PubMed:34273339). Catalysis by LPMOs requires the reduction of the active-site copper from Cu(II) to Cu(I) by a reducing agent and H(2)O(2) or O(2) as a cosubstrate (PubMed:34273339). Does not use cellulose, cello-oligosaccharides, xyloglucan, xylan, chitin nor starch as substrates (PubMed:34273339). Able to depolymerize the lignin dimer guaicyl glycerol beta-guaicyl ether (GGE) (PubMed:34273339).</text>
</comment>
<comment type="cofactor">
    <cofactor evidence="6">
        <name>Cu(2+)</name>
        <dbReference type="ChEBI" id="CHEBI:29036"/>
    </cofactor>
    <text evidence="1">Binds 1 copper ion per subunit.</text>
</comment>
<comment type="biophysicochemical properties">
    <kinetics>
        <KM evidence="6">58.96 mM for guaiacol</KM>
        <KM evidence="6">13.43 mM for 2,6-dimethoxyphenol</KM>
        <KM evidence="6">35.36 mM for 3,4-dimethoxybenzyl alcohol</KM>
    </kinetics>
    <phDependence>
        <text evidence="6">Optimum pH is 7.0.</text>
    </phDependence>
    <temperatureDependence>
        <text evidence="6">Optimum temperature is 100 degrees Celsius.</text>
    </temperatureDependence>
</comment>
<comment type="subcellular location">
    <subcellularLocation>
        <location evidence="1">Secreted</location>
    </subcellularLocation>
</comment>
<comment type="biotechnology">
    <text evidence="6">The activity for cleavage of beta-O-4 in lignin and hyperthermostability could be very useful to design an efficient, yet greener and sustainable process for producing aromatic compounds through lignin depolymerisation.</text>
</comment>
<comment type="similarity">
    <text evidence="8">Belongs to the polysaccharide monooxygenase AA9 family.</text>
</comment>
<protein>
    <recommendedName>
        <fullName evidence="7">AA9 family lytic polysaccharide monooxygenase AA17</fullName>
        <shortName evidence="7">LPMO9 AA17</shortName>
        <ecNumber evidence="6">1.14.99.-</ecNumber>
    </recommendedName>
    <alternativeName>
        <fullName evidence="8">Cellulase AA17</fullName>
    </alternativeName>
    <alternativeName>
        <fullName evidence="8">Endo-beta-1,4-glucanase AA17</fullName>
        <shortName evidence="8">Endoglucanase AA17</shortName>
    </alternativeName>
</protein>